<proteinExistence type="evidence at protein level"/>
<sequence length="323" mass="36710">MAEGERQPPPDSSEETPPTTQNFIIPKKEIHTVPDMGKWKRSQAYADYIGFILTLNEGVKGKKLTFDYKVSEAIEKLVALLDTLDRWIDETPPVDQPSRFGNKAYRTWYAKLDQEAENLVATVVPTHLAAAVPEVAVYLKEAVGNSTRIDYGTGHEAAFAAFLCCLCKIGVLRVDDQVAIVFKVFDRYLEVMRKLQKTYRMEPAGSQGVWGLDDFQFLPFIWGSSQLIDHPHLEPRHFVDEKAVSENHKDYMFLQCILFITEMKTGPFAEHSNQLWNISAVPSWSKVNQGLIRMYKAECLEKFPVIQHFKFGSLLPIHPVTSG</sequence>
<dbReference type="EC" id="5.2.1.8" evidence="2"/>
<dbReference type="EMBL" id="AY035997">
    <property type="protein sequence ID" value="AAK62028.1"/>
    <property type="molecule type" value="mRNA"/>
</dbReference>
<dbReference type="EMBL" id="BC006626">
    <property type="protein sequence ID" value="AAH06626.1"/>
    <property type="molecule type" value="mRNA"/>
</dbReference>
<dbReference type="EMBL" id="BC052852">
    <property type="protein sequence ID" value="AAH52852.1"/>
    <property type="molecule type" value="mRNA"/>
</dbReference>
<dbReference type="CCDS" id="CCDS15883.1"/>
<dbReference type="RefSeq" id="NP_620087.3">
    <property type="nucleotide sequence ID" value="NM_138748.5"/>
</dbReference>
<dbReference type="SMR" id="P58389"/>
<dbReference type="BioGRID" id="225960">
    <property type="interactions" value="13"/>
</dbReference>
<dbReference type="FunCoup" id="P58389">
    <property type="interactions" value="2678"/>
</dbReference>
<dbReference type="IntAct" id="P58389">
    <property type="interactions" value="2"/>
</dbReference>
<dbReference type="STRING" id="10090.ENSMUSP00000046837"/>
<dbReference type="BindingDB" id="P58389"/>
<dbReference type="GlyGen" id="P58389">
    <property type="glycosylation" value="2 sites, 1 O-linked glycan (2 sites)"/>
</dbReference>
<dbReference type="iPTMnet" id="P58389"/>
<dbReference type="PhosphoSitePlus" id="P58389"/>
<dbReference type="SwissPalm" id="P58389"/>
<dbReference type="jPOST" id="P58389"/>
<dbReference type="PaxDb" id="10090-ENSMUSP00000046837"/>
<dbReference type="PeptideAtlas" id="P58389"/>
<dbReference type="ProteomicsDB" id="291631"/>
<dbReference type="Pumba" id="P58389"/>
<dbReference type="Antibodypedia" id="1074">
    <property type="antibodies" value="372 antibodies from 39 providers"/>
</dbReference>
<dbReference type="DNASU" id="110854"/>
<dbReference type="Ensembl" id="ENSMUST00000042055.10">
    <property type="protein sequence ID" value="ENSMUSP00000046837.4"/>
    <property type="gene ID" value="ENSMUSG00000039515.12"/>
</dbReference>
<dbReference type="GeneID" id="110854"/>
<dbReference type="KEGG" id="mmu:110854"/>
<dbReference type="UCSC" id="uc008jcn.2">
    <property type="organism name" value="mouse"/>
</dbReference>
<dbReference type="AGR" id="MGI:1346006"/>
<dbReference type="CTD" id="5524"/>
<dbReference type="MGI" id="MGI:1346006">
    <property type="gene designation" value="Ptpa"/>
</dbReference>
<dbReference type="VEuPathDB" id="HostDB:ENSMUSG00000039515"/>
<dbReference type="eggNOG" id="KOG2867">
    <property type="taxonomic scope" value="Eukaryota"/>
</dbReference>
<dbReference type="GeneTree" id="ENSGT00390000011500"/>
<dbReference type="HOGENOM" id="CLU_030733_3_0_1"/>
<dbReference type="InParanoid" id="P58389"/>
<dbReference type="OMA" id="SWIKINA"/>
<dbReference type="OrthoDB" id="16120at2759"/>
<dbReference type="PhylomeDB" id="P58389"/>
<dbReference type="TreeFam" id="TF105555"/>
<dbReference type="BioGRID-ORCS" id="110854">
    <property type="hits" value="23 hits in 80 CRISPR screens"/>
</dbReference>
<dbReference type="ChiTaRS" id="Ptpa">
    <property type="organism name" value="mouse"/>
</dbReference>
<dbReference type="PRO" id="PR:P58389"/>
<dbReference type="Proteomes" id="UP000000589">
    <property type="component" value="Chromosome 2"/>
</dbReference>
<dbReference type="RNAct" id="P58389">
    <property type="molecule type" value="protein"/>
</dbReference>
<dbReference type="Bgee" id="ENSMUSG00000039515">
    <property type="expression patterns" value="Expressed in aortic valve and 262 other cell types or tissues"/>
</dbReference>
<dbReference type="ExpressionAtlas" id="P58389">
    <property type="expression patterns" value="baseline and differential"/>
</dbReference>
<dbReference type="GO" id="GO:1904949">
    <property type="term" value="C:ATPase complex"/>
    <property type="evidence" value="ECO:0000250"/>
    <property type="project" value="HGNC-UCL"/>
</dbReference>
<dbReference type="GO" id="GO:0034704">
    <property type="term" value="C:calcium channel complex"/>
    <property type="evidence" value="ECO:0007669"/>
    <property type="project" value="Ensembl"/>
</dbReference>
<dbReference type="GO" id="GO:0005737">
    <property type="term" value="C:cytoplasm"/>
    <property type="evidence" value="ECO:0007669"/>
    <property type="project" value="UniProtKB-SubCell"/>
</dbReference>
<dbReference type="GO" id="GO:0005654">
    <property type="term" value="C:nucleoplasm"/>
    <property type="evidence" value="ECO:0007669"/>
    <property type="project" value="Ensembl"/>
</dbReference>
<dbReference type="GO" id="GO:0000159">
    <property type="term" value="C:protein phosphatase type 2A complex"/>
    <property type="evidence" value="ECO:0000250"/>
    <property type="project" value="BHF-UCL"/>
</dbReference>
<dbReference type="GO" id="GO:0005524">
    <property type="term" value="F:ATP binding"/>
    <property type="evidence" value="ECO:0000250"/>
    <property type="project" value="HGNC-UCL"/>
</dbReference>
<dbReference type="GO" id="GO:0046872">
    <property type="term" value="F:metal ion binding"/>
    <property type="evidence" value="ECO:0007669"/>
    <property type="project" value="UniProtKB-KW"/>
</dbReference>
<dbReference type="GO" id="GO:0003755">
    <property type="term" value="F:peptidyl-prolyl cis-trans isomerase activity"/>
    <property type="evidence" value="ECO:0007669"/>
    <property type="project" value="UniProtKB-KW"/>
</dbReference>
<dbReference type="GO" id="GO:0004721">
    <property type="term" value="F:phosphoprotein phosphatase activity"/>
    <property type="evidence" value="ECO:0007669"/>
    <property type="project" value="Ensembl"/>
</dbReference>
<dbReference type="GO" id="GO:0042803">
    <property type="term" value="F:protein homodimerization activity"/>
    <property type="evidence" value="ECO:0000250"/>
    <property type="project" value="HGNC-UCL"/>
</dbReference>
<dbReference type="GO" id="GO:0051721">
    <property type="term" value="F:protein phosphatase 2A binding"/>
    <property type="evidence" value="ECO:0000250"/>
    <property type="project" value="HGNC-UCL"/>
</dbReference>
<dbReference type="GO" id="GO:0019888">
    <property type="term" value="F:protein phosphatase regulator activity"/>
    <property type="evidence" value="ECO:0000250"/>
    <property type="project" value="HGNC-UCL"/>
</dbReference>
<dbReference type="GO" id="GO:0008160">
    <property type="term" value="F:protein tyrosine phosphatase activator activity"/>
    <property type="evidence" value="ECO:0000250"/>
    <property type="project" value="HGNC-UCL"/>
</dbReference>
<dbReference type="GO" id="GO:0005102">
    <property type="term" value="F:signaling receptor binding"/>
    <property type="evidence" value="ECO:0007669"/>
    <property type="project" value="Ensembl"/>
</dbReference>
<dbReference type="GO" id="GO:0043065">
    <property type="term" value="P:positive regulation of apoptotic process"/>
    <property type="evidence" value="ECO:0007669"/>
    <property type="project" value="Ensembl"/>
</dbReference>
<dbReference type="CDD" id="cd04087">
    <property type="entry name" value="PTPA"/>
    <property type="match status" value="1"/>
</dbReference>
<dbReference type="FunFam" id="1.20.120.1150:FF:000001">
    <property type="entry name" value="Serine/threonine-protein phosphatase 2A activator"/>
    <property type="match status" value="1"/>
</dbReference>
<dbReference type="Gene3D" id="1.20.120.1150">
    <property type="match status" value="1"/>
</dbReference>
<dbReference type="InterPro" id="IPR004327">
    <property type="entry name" value="Phstyr_phstse_ac"/>
</dbReference>
<dbReference type="InterPro" id="IPR043170">
    <property type="entry name" value="PTPA_C_lid"/>
</dbReference>
<dbReference type="InterPro" id="IPR037218">
    <property type="entry name" value="PTPA_sf"/>
</dbReference>
<dbReference type="PANTHER" id="PTHR10012">
    <property type="entry name" value="SERINE/THREONINE-PROTEIN PHOSPHATASE 2A REGULATORY SUBUNIT B"/>
    <property type="match status" value="1"/>
</dbReference>
<dbReference type="PANTHER" id="PTHR10012:SF0">
    <property type="entry name" value="SERINE_THREONINE-PROTEIN PHOSPHATASE 2A ACTIVATOR"/>
    <property type="match status" value="1"/>
</dbReference>
<dbReference type="Pfam" id="PF03095">
    <property type="entry name" value="PTPA"/>
    <property type="match status" value="1"/>
</dbReference>
<dbReference type="PIRSF" id="PIRSF016325">
    <property type="entry name" value="Phstyr_phstse_ac"/>
    <property type="match status" value="1"/>
</dbReference>
<dbReference type="SUPFAM" id="SSF140984">
    <property type="entry name" value="PTPA-like"/>
    <property type="match status" value="1"/>
</dbReference>
<comment type="function">
    <text evidence="1 2">PPIases accelerate the folding of proteins. It catalyzes the cis-trans isomerization of proline imidic peptide bonds in oligopeptides (By similarity). Acts as a regulatory subunit for serine/threonine-protein phosphatase 2A (PP2A) (By similarity). Modulates PP2A activity or substrate specificity, probably by inducing a conformational change in the catalytic subunit, a proposed direct target of the PPIase (By similarity). Can reactivate inactive phosphatase PP2A-phosphatase methylesterase complexes (PP2A(i)) in presence of ATP and Mg(2+) (By similarity). Reversibly stimulates the variable phosphotyrosyl phosphatase activity of PP2A core heterodimer PP2A(D) in presence of ATP and Mg(2+) (in vitro) (By similarity). The phosphotyrosyl phosphatase activity is dependent of an ATPase activity of the PP2A(D):PPP2R4 complex (By similarity). Is involved in apoptosis; the function appears to be independent from PP2A (By similarity).</text>
</comment>
<comment type="catalytic activity">
    <reaction evidence="2">
        <text>[protein]-peptidylproline (omega=180) = [protein]-peptidylproline (omega=0)</text>
        <dbReference type="Rhea" id="RHEA:16237"/>
        <dbReference type="Rhea" id="RHEA-COMP:10747"/>
        <dbReference type="Rhea" id="RHEA-COMP:10748"/>
        <dbReference type="ChEBI" id="CHEBI:83833"/>
        <dbReference type="ChEBI" id="CHEBI:83834"/>
        <dbReference type="EC" id="5.2.1.8"/>
    </reaction>
</comment>
<comment type="subunit">
    <text evidence="1 4">Associates with PP2A heterodimeric core enzyme PP2A(D), composed of a 36 kDa catalytic subunit (subunit C) and a 65 kDa constant regulatory subunit (PR65 or subunit A) (By similarity). Interacts with the catalytic subunit PPP2CA (via C-terminus) (By similarity). Interacts with PPP2CB (PubMed:12952889).</text>
</comment>
<comment type="subcellular location">
    <subcellularLocation>
        <location evidence="1">Cytoplasm</location>
    </subcellularLocation>
    <subcellularLocation>
        <location evidence="1">Nucleus</location>
    </subcellularLocation>
</comment>
<comment type="similarity">
    <text evidence="5">Belongs to the PTPA-type PPIase family.</text>
</comment>
<gene>
    <name type="primary">Ptpa</name>
    <name type="synonym">Ppp2r4</name>
</gene>
<evidence type="ECO:0000250" key="1">
    <source>
        <dbReference type="UniProtKB" id="Q15257"/>
    </source>
</evidence>
<evidence type="ECO:0000250" key="2">
    <source>
        <dbReference type="UniProtKB" id="Q28717"/>
    </source>
</evidence>
<evidence type="ECO:0000256" key="3">
    <source>
        <dbReference type="SAM" id="MobiDB-lite"/>
    </source>
</evidence>
<evidence type="ECO:0000269" key="4">
    <source>
    </source>
</evidence>
<evidence type="ECO:0000305" key="5"/>
<feature type="initiator methionine" description="Removed" evidence="1">
    <location>
        <position position="1"/>
    </location>
</feature>
<feature type="chain" id="PRO_0000071525" description="Serine/threonine-protein phosphatase 2A activator">
    <location>
        <begin position="2"/>
        <end position="323"/>
    </location>
</feature>
<feature type="region of interest" description="Disordered" evidence="3">
    <location>
        <begin position="1"/>
        <end position="22"/>
    </location>
</feature>
<feature type="binding site" evidence="1">
    <location>
        <position position="148"/>
    </location>
    <ligand>
        <name>ATP</name>
        <dbReference type="ChEBI" id="CHEBI:30616"/>
    </ligand>
</feature>
<feature type="binding site" evidence="1">
    <location>
        <position position="153"/>
    </location>
    <ligand>
        <name>ATP</name>
        <dbReference type="ChEBI" id="CHEBI:30616"/>
    </ligand>
</feature>
<feature type="binding site" evidence="1">
    <location>
        <position position="154"/>
    </location>
    <ligand>
        <name>ATP</name>
        <dbReference type="ChEBI" id="CHEBI:30616"/>
    </ligand>
</feature>
<feature type="binding site" evidence="1">
    <location>
        <position position="208"/>
    </location>
    <ligand>
        <name>Mg(2+)</name>
        <dbReference type="ChEBI" id="CHEBI:18420"/>
    </ligand>
</feature>
<feature type="binding site" evidence="1">
    <location>
        <position position="214"/>
    </location>
    <ligand>
        <name>Mg(2+)</name>
        <dbReference type="ChEBI" id="CHEBI:18420"/>
    </ligand>
</feature>
<feature type="binding site" evidence="1">
    <location>
        <position position="304"/>
    </location>
    <ligand>
        <name>ATP</name>
        <dbReference type="ChEBI" id="CHEBI:30616"/>
    </ligand>
</feature>
<feature type="binding site" evidence="1">
    <location>
        <position position="307"/>
    </location>
    <ligand>
        <name>ATP</name>
        <dbReference type="ChEBI" id="CHEBI:30616"/>
    </ligand>
</feature>
<feature type="binding site" evidence="1">
    <location>
        <position position="308"/>
    </location>
    <ligand>
        <name>ATP</name>
        <dbReference type="ChEBI" id="CHEBI:30616"/>
    </ligand>
</feature>
<feature type="modified residue" description="N-acetylalanine" evidence="1">
    <location>
        <position position="2"/>
    </location>
</feature>
<feature type="sequence conflict" description="In Ref. 1; AAK62028." evidence="5" ref="1">
    <location>
        <position position="10"/>
    </location>
</feature>
<feature type="sequence conflict" description="In Ref. 1; AAK62028." evidence="5" ref="1">
    <original>Q</original>
    <variation>L</variation>
    <location>
        <position position="196"/>
    </location>
</feature>
<organism>
    <name type="scientific">Mus musculus</name>
    <name type="common">Mouse</name>
    <dbReference type="NCBI Taxonomy" id="10090"/>
    <lineage>
        <taxon>Eukaryota</taxon>
        <taxon>Metazoa</taxon>
        <taxon>Chordata</taxon>
        <taxon>Craniata</taxon>
        <taxon>Vertebrata</taxon>
        <taxon>Euteleostomi</taxon>
        <taxon>Mammalia</taxon>
        <taxon>Eutheria</taxon>
        <taxon>Euarchontoglires</taxon>
        <taxon>Glires</taxon>
        <taxon>Rodentia</taxon>
        <taxon>Myomorpha</taxon>
        <taxon>Muroidea</taxon>
        <taxon>Muridae</taxon>
        <taxon>Murinae</taxon>
        <taxon>Mus</taxon>
        <taxon>Mus</taxon>
    </lineage>
</organism>
<accession>P58389</accession>
<protein>
    <recommendedName>
        <fullName>Serine/threonine-protein phosphatase 2A activator</fullName>
        <ecNumber evidence="2">5.2.1.8</ecNumber>
    </recommendedName>
    <alternativeName>
        <fullName>PP2A, subunit B', PR53 isoform</fullName>
    </alternativeName>
    <alternativeName>
        <fullName>Phosphotyrosyl phosphatase activator</fullName>
        <shortName>PTPA</shortName>
    </alternativeName>
    <alternativeName>
        <fullName>Serine/threonine-protein phosphatase 2A regulatory subunit 4</fullName>
    </alternativeName>
    <alternativeName>
        <fullName>Serine/threonine-protein phosphatase 2A regulatory subunit B'</fullName>
    </alternativeName>
</protein>
<reference key="1">
    <citation type="submission" date="2001-05" db="EMBL/GenBank/DDBJ databases">
        <title>Characterization of the mouse homolog of the human phosphotyrosyl phosphatase activator, PTPA.</title>
        <authorList>
            <person name="David J."/>
            <person name="Yang X."/>
            <person name="Hashimoto K."/>
            <person name="Ramotar D."/>
        </authorList>
    </citation>
    <scope>NUCLEOTIDE SEQUENCE [MRNA]</scope>
    <source>
        <strain>C57BL/6J</strain>
        <tissue>Brain</tissue>
    </source>
</reference>
<reference key="2">
    <citation type="journal article" date="2004" name="Genome Res.">
        <title>The status, quality, and expansion of the NIH full-length cDNA project: the Mammalian Gene Collection (MGC).</title>
        <authorList>
            <consortium name="The MGC Project Team"/>
        </authorList>
    </citation>
    <scope>NUCLEOTIDE SEQUENCE [LARGE SCALE MRNA]</scope>
    <source>
        <strain>C3H/He</strain>
        <strain>FVB/N</strain>
        <tissue>Mammary gland</tissue>
        <tissue>Osteoblast</tissue>
    </source>
</reference>
<reference key="3">
    <citation type="journal article" date="2003" name="Genes Dev.">
        <title>A novel and essential mechanism determining specificity and activity of protein phosphatase 2A (PP2A) in vivo.</title>
        <authorList>
            <person name="Fellner T."/>
            <person name="Lackner D.H."/>
            <person name="Hombauer H."/>
            <person name="Piribauer P."/>
            <person name="Mudrak I."/>
            <person name="Zaragoza K."/>
            <person name="Juno C."/>
            <person name="Ogris E."/>
        </authorList>
    </citation>
    <scope>FUNCTION</scope>
    <scope>INTERACTION WITH PPP2CB</scope>
</reference>
<reference key="4">
    <citation type="journal article" date="2010" name="Cell">
        <title>A tissue-specific atlas of mouse protein phosphorylation and expression.</title>
        <authorList>
            <person name="Huttlin E.L."/>
            <person name="Jedrychowski M.P."/>
            <person name="Elias J.E."/>
            <person name="Goswami T."/>
            <person name="Rad R."/>
            <person name="Beausoleil S.A."/>
            <person name="Villen J."/>
            <person name="Haas W."/>
            <person name="Sowa M.E."/>
            <person name="Gygi S.P."/>
        </authorList>
    </citation>
    <scope>IDENTIFICATION BY MASS SPECTROMETRY [LARGE SCALE ANALYSIS]</scope>
    <source>
        <tissue>Brain</tissue>
        <tissue>Brown adipose tissue</tissue>
        <tissue>Heart</tissue>
        <tissue>Kidney</tissue>
        <tissue>Liver</tissue>
        <tissue>Lung</tissue>
        <tissue>Pancreas</tissue>
        <tissue>Spleen</tissue>
        <tissue>Testis</tissue>
    </source>
</reference>
<name>PTPA_MOUSE</name>
<keyword id="KW-0007">Acetylation</keyword>
<keyword id="KW-0067">ATP-binding</keyword>
<keyword id="KW-0963">Cytoplasm</keyword>
<keyword id="KW-0413">Isomerase</keyword>
<keyword id="KW-0460">Magnesium</keyword>
<keyword id="KW-0479">Metal-binding</keyword>
<keyword id="KW-0547">Nucleotide-binding</keyword>
<keyword id="KW-0539">Nucleus</keyword>
<keyword id="KW-1185">Reference proteome</keyword>
<keyword id="KW-0697">Rotamase</keyword>